<name>T10IP_HUMAN</name>
<gene>
    <name type="primary">TSGA10IP</name>
</gene>
<protein>
    <recommendedName>
        <fullName>Testis-specific protein 10-interacting protein</fullName>
    </recommendedName>
    <alternativeName>
        <fullName>Tsga10-interacting protein</fullName>
    </alternativeName>
</protein>
<keyword id="KW-0025">Alternative splicing</keyword>
<keyword id="KW-0175">Coiled coil</keyword>
<keyword id="KW-1267">Proteomics identification</keyword>
<keyword id="KW-1185">Reference proteome</keyword>
<reference key="1">
    <citation type="journal article" date="2004" name="Nat. Genet.">
        <title>Complete sequencing and characterization of 21,243 full-length human cDNAs.</title>
        <authorList>
            <person name="Ota T."/>
            <person name="Suzuki Y."/>
            <person name="Nishikawa T."/>
            <person name="Otsuki T."/>
            <person name="Sugiyama T."/>
            <person name="Irie R."/>
            <person name="Wakamatsu A."/>
            <person name="Hayashi K."/>
            <person name="Sato H."/>
            <person name="Nagai K."/>
            <person name="Kimura K."/>
            <person name="Makita H."/>
            <person name="Sekine M."/>
            <person name="Obayashi M."/>
            <person name="Nishi T."/>
            <person name="Shibahara T."/>
            <person name="Tanaka T."/>
            <person name="Ishii S."/>
            <person name="Yamamoto J."/>
            <person name="Saito K."/>
            <person name="Kawai Y."/>
            <person name="Isono Y."/>
            <person name="Nakamura Y."/>
            <person name="Nagahari K."/>
            <person name="Murakami K."/>
            <person name="Yasuda T."/>
            <person name="Iwayanagi T."/>
            <person name="Wagatsuma M."/>
            <person name="Shiratori A."/>
            <person name="Sudo H."/>
            <person name="Hosoiri T."/>
            <person name="Kaku Y."/>
            <person name="Kodaira H."/>
            <person name="Kondo H."/>
            <person name="Sugawara M."/>
            <person name="Takahashi M."/>
            <person name="Kanda K."/>
            <person name="Yokoi T."/>
            <person name="Furuya T."/>
            <person name="Kikkawa E."/>
            <person name="Omura Y."/>
            <person name="Abe K."/>
            <person name="Kamihara K."/>
            <person name="Katsuta N."/>
            <person name="Sato K."/>
            <person name="Tanikawa M."/>
            <person name="Yamazaki M."/>
            <person name="Ninomiya K."/>
            <person name="Ishibashi T."/>
            <person name="Yamashita H."/>
            <person name="Murakawa K."/>
            <person name="Fujimori K."/>
            <person name="Tanai H."/>
            <person name="Kimata M."/>
            <person name="Watanabe M."/>
            <person name="Hiraoka S."/>
            <person name="Chiba Y."/>
            <person name="Ishida S."/>
            <person name="Ono Y."/>
            <person name="Takiguchi S."/>
            <person name="Watanabe S."/>
            <person name="Yosida M."/>
            <person name="Hotuta T."/>
            <person name="Kusano J."/>
            <person name="Kanehori K."/>
            <person name="Takahashi-Fujii A."/>
            <person name="Hara H."/>
            <person name="Tanase T.-O."/>
            <person name="Nomura Y."/>
            <person name="Togiya S."/>
            <person name="Komai F."/>
            <person name="Hara R."/>
            <person name="Takeuchi K."/>
            <person name="Arita M."/>
            <person name="Imose N."/>
            <person name="Musashino K."/>
            <person name="Yuuki H."/>
            <person name="Oshima A."/>
            <person name="Sasaki N."/>
            <person name="Aotsuka S."/>
            <person name="Yoshikawa Y."/>
            <person name="Matsunawa H."/>
            <person name="Ichihara T."/>
            <person name="Shiohata N."/>
            <person name="Sano S."/>
            <person name="Moriya S."/>
            <person name="Momiyama H."/>
            <person name="Satoh N."/>
            <person name="Takami S."/>
            <person name="Terashima Y."/>
            <person name="Suzuki O."/>
            <person name="Nakagawa S."/>
            <person name="Senoh A."/>
            <person name="Mizoguchi H."/>
            <person name="Goto Y."/>
            <person name="Shimizu F."/>
            <person name="Wakebe H."/>
            <person name="Hishigaki H."/>
            <person name="Watanabe T."/>
            <person name="Sugiyama A."/>
            <person name="Takemoto M."/>
            <person name="Kawakami B."/>
            <person name="Yamazaki M."/>
            <person name="Watanabe K."/>
            <person name="Kumagai A."/>
            <person name="Itakura S."/>
            <person name="Fukuzumi Y."/>
            <person name="Fujimori Y."/>
            <person name="Komiyama M."/>
            <person name="Tashiro H."/>
            <person name="Tanigami A."/>
            <person name="Fujiwara T."/>
            <person name="Ono T."/>
            <person name="Yamada K."/>
            <person name="Fujii Y."/>
            <person name="Ozaki K."/>
            <person name="Hirao M."/>
            <person name="Ohmori Y."/>
            <person name="Kawabata A."/>
            <person name="Hikiji T."/>
            <person name="Kobatake N."/>
            <person name="Inagaki H."/>
            <person name="Ikema Y."/>
            <person name="Okamoto S."/>
            <person name="Okitani R."/>
            <person name="Kawakami T."/>
            <person name="Noguchi S."/>
            <person name="Itoh T."/>
            <person name="Shigeta K."/>
            <person name="Senba T."/>
            <person name="Matsumura K."/>
            <person name="Nakajima Y."/>
            <person name="Mizuno T."/>
            <person name="Morinaga M."/>
            <person name="Sasaki M."/>
            <person name="Togashi T."/>
            <person name="Oyama M."/>
            <person name="Hata H."/>
            <person name="Watanabe M."/>
            <person name="Komatsu T."/>
            <person name="Mizushima-Sugano J."/>
            <person name="Satoh T."/>
            <person name="Shirai Y."/>
            <person name="Takahashi Y."/>
            <person name="Nakagawa K."/>
            <person name="Okumura K."/>
            <person name="Nagase T."/>
            <person name="Nomura N."/>
            <person name="Kikuchi H."/>
            <person name="Masuho Y."/>
            <person name="Yamashita R."/>
            <person name="Nakai K."/>
            <person name="Yada T."/>
            <person name="Nakamura Y."/>
            <person name="Ohara O."/>
            <person name="Isogai T."/>
            <person name="Sugano S."/>
        </authorList>
    </citation>
    <scope>NUCLEOTIDE SEQUENCE [LARGE SCALE MRNA] (ISOFORM 1)</scope>
    <source>
        <tissue>Testis</tissue>
    </source>
</reference>
<reference key="2">
    <citation type="journal article" date="2006" name="Nature">
        <title>Human chromosome 11 DNA sequence and analysis including novel gene identification.</title>
        <authorList>
            <person name="Taylor T.D."/>
            <person name="Noguchi H."/>
            <person name="Totoki Y."/>
            <person name="Toyoda A."/>
            <person name="Kuroki Y."/>
            <person name="Dewar K."/>
            <person name="Lloyd C."/>
            <person name="Itoh T."/>
            <person name="Takeda T."/>
            <person name="Kim D.-W."/>
            <person name="She X."/>
            <person name="Barlow K.F."/>
            <person name="Bloom T."/>
            <person name="Bruford E."/>
            <person name="Chang J.L."/>
            <person name="Cuomo C.A."/>
            <person name="Eichler E."/>
            <person name="FitzGerald M.G."/>
            <person name="Jaffe D.B."/>
            <person name="LaButti K."/>
            <person name="Nicol R."/>
            <person name="Park H.-S."/>
            <person name="Seaman C."/>
            <person name="Sougnez C."/>
            <person name="Yang X."/>
            <person name="Zimmer A.R."/>
            <person name="Zody M.C."/>
            <person name="Birren B.W."/>
            <person name="Nusbaum C."/>
            <person name="Fujiyama A."/>
            <person name="Hattori M."/>
            <person name="Rogers J."/>
            <person name="Lander E.S."/>
            <person name="Sakaki Y."/>
        </authorList>
    </citation>
    <scope>NUCLEOTIDE SEQUENCE [LARGE SCALE GENOMIC DNA]</scope>
</reference>
<reference key="3">
    <citation type="journal article" date="2004" name="Genome Res.">
        <title>The status, quality, and expansion of the NIH full-length cDNA project: the Mammalian Gene Collection (MGC).</title>
        <authorList>
            <consortium name="The MGC Project Team"/>
        </authorList>
    </citation>
    <scope>NUCLEOTIDE SEQUENCE [LARGE SCALE MRNA] (ISOFORMS 1 AND 2)</scope>
    <scope>VARIANT VAL-521</scope>
</reference>
<accession>Q3SY00</accession>
<accession>Q3SXZ9</accession>
<accession>Q3SY01</accession>
<accession>Q96M26</accession>
<organism>
    <name type="scientific">Homo sapiens</name>
    <name type="common">Human</name>
    <dbReference type="NCBI Taxonomy" id="9606"/>
    <lineage>
        <taxon>Eukaryota</taxon>
        <taxon>Metazoa</taxon>
        <taxon>Chordata</taxon>
        <taxon>Craniata</taxon>
        <taxon>Vertebrata</taxon>
        <taxon>Euteleostomi</taxon>
        <taxon>Mammalia</taxon>
        <taxon>Eutheria</taxon>
        <taxon>Euarchontoglires</taxon>
        <taxon>Primates</taxon>
        <taxon>Haplorrhini</taxon>
        <taxon>Catarrhini</taxon>
        <taxon>Hominidae</taxon>
        <taxon>Homo</taxon>
    </lineage>
</organism>
<proteinExistence type="evidence at protein level"/>
<feature type="chain" id="PRO_0000331421" description="Testis-specific protein 10-interacting protein">
    <location>
        <begin position="1"/>
        <end position="556"/>
    </location>
</feature>
<feature type="region of interest" description="Disordered" evidence="2">
    <location>
        <begin position="1"/>
        <end position="31"/>
    </location>
</feature>
<feature type="region of interest" description="Disordered" evidence="2">
    <location>
        <begin position="50"/>
        <end position="102"/>
    </location>
</feature>
<feature type="region of interest" description="Disordered" evidence="2">
    <location>
        <begin position="123"/>
        <end position="155"/>
    </location>
</feature>
<feature type="region of interest" description="Disordered" evidence="2">
    <location>
        <begin position="179"/>
        <end position="309"/>
    </location>
</feature>
<feature type="region of interest" description="Disordered" evidence="2">
    <location>
        <begin position="503"/>
        <end position="556"/>
    </location>
</feature>
<feature type="coiled-coil region" evidence="1">
    <location>
        <begin position="379"/>
        <end position="464"/>
    </location>
</feature>
<feature type="compositionally biased region" description="Polar residues" evidence="2">
    <location>
        <begin position="1"/>
        <end position="16"/>
    </location>
</feature>
<feature type="compositionally biased region" description="Polar residues" evidence="2">
    <location>
        <begin position="208"/>
        <end position="219"/>
    </location>
</feature>
<feature type="compositionally biased region" description="Acidic residues" evidence="2">
    <location>
        <begin position="244"/>
        <end position="258"/>
    </location>
</feature>
<feature type="compositionally biased region" description="Polar residues" evidence="2">
    <location>
        <begin position="289"/>
        <end position="301"/>
    </location>
</feature>
<feature type="splice variant" id="VSP_033196" description="In isoform 2." evidence="4">
    <original>PQKLPWKTLRAAFQASKRNGKAYASGYDETFVSANLPNRTFHKRQEATRSLLQAWERQRQEERQQAELR</original>
    <variation>SHQEPAAGLGAAAAGGAAAGRAAAGPDTACTAAGGPLPGSLRTQREPGPWGGPAQAGGAEAPGATALC</variation>
    <location>
        <begin position="336"/>
        <end position="404"/>
    </location>
</feature>
<feature type="splice variant" id="VSP_033197" description="In isoform 2." evidence="4">
    <location>
        <begin position="405"/>
        <end position="556"/>
    </location>
</feature>
<feature type="sequence variant" id="VAR_042855" description="In dbSNP:rs565921.">
    <original>A</original>
    <variation>V</variation>
    <location>
        <position position="210"/>
    </location>
</feature>
<feature type="sequence variant" id="VAR_042856" description="In dbSNP:rs7927388.">
    <original>R</original>
    <variation>S</variation>
    <location>
        <position position="237"/>
    </location>
</feature>
<feature type="sequence variant" id="VAR_042857" description="In dbSNP:rs7927826.">
    <original>S</original>
    <variation>N</variation>
    <location>
        <position position="292"/>
    </location>
</feature>
<feature type="sequence variant" id="VAR_042858" description="In dbSNP:rs7927841.">
    <original>R</original>
    <variation>P</variation>
    <location>
        <position position="305"/>
    </location>
</feature>
<feature type="sequence variant" id="VAR_042859" description="In dbSNP:rs491973." evidence="3">
    <original>M</original>
    <variation>V</variation>
    <location>
        <position position="521"/>
    </location>
</feature>
<feature type="sequence conflict" description="In Ref. 1; BAB71488." evidence="5" ref="1">
    <original>S</original>
    <variation>P</variation>
    <location>
        <position position="67"/>
    </location>
</feature>
<evidence type="ECO:0000255" key="1"/>
<evidence type="ECO:0000256" key="2">
    <source>
        <dbReference type="SAM" id="MobiDB-lite"/>
    </source>
</evidence>
<evidence type="ECO:0000269" key="3">
    <source>
    </source>
</evidence>
<evidence type="ECO:0000303" key="4">
    <source>
    </source>
</evidence>
<evidence type="ECO:0000305" key="5"/>
<dbReference type="EMBL" id="AK057442">
    <property type="protein sequence ID" value="BAB71488.1"/>
    <property type="molecule type" value="mRNA"/>
</dbReference>
<dbReference type="EMBL" id="AP006287">
    <property type="status" value="NOT_ANNOTATED_CDS"/>
    <property type="molecule type" value="Genomic_DNA"/>
</dbReference>
<dbReference type="EMBL" id="BC104022">
    <property type="protein sequence ID" value="AAI04023.1"/>
    <property type="molecule type" value="mRNA"/>
</dbReference>
<dbReference type="EMBL" id="BC104023">
    <property type="protein sequence ID" value="AAI04024.1"/>
    <property type="molecule type" value="mRNA"/>
</dbReference>
<dbReference type="CCDS" id="CCDS66138.1">
    <molecule id="Q3SY00-1"/>
</dbReference>
<dbReference type="RefSeq" id="NP_689975.2">
    <molecule id="Q3SY00-1"/>
    <property type="nucleotide sequence ID" value="NM_152762.3"/>
</dbReference>
<dbReference type="SMR" id="Q3SY00"/>
<dbReference type="BioGRID" id="129021">
    <property type="interactions" value="143"/>
</dbReference>
<dbReference type="FunCoup" id="Q3SY00">
    <property type="interactions" value="29"/>
</dbReference>
<dbReference type="IntAct" id="Q3SY00">
    <property type="interactions" value="129"/>
</dbReference>
<dbReference type="STRING" id="9606.ENSP00000484252"/>
<dbReference type="GlyGen" id="Q3SY00">
    <property type="glycosylation" value="1 site"/>
</dbReference>
<dbReference type="iPTMnet" id="Q3SY00"/>
<dbReference type="PhosphoSitePlus" id="Q3SY00"/>
<dbReference type="BioMuta" id="TSGA10IP"/>
<dbReference type="DMDM" id="121942943"/>
<dbReference type="MassIVE" id="Q3SY00"/>
<dbReference type="PaxDb" id="9606-ENSP00000484252"/>
<dbReference type="Antibodypedia" id="72461">
    <property type="antibodies" value="94 antibodies from 15 providers"/>
</dbReference>
<dbReference type="DNASU" id="254187"/>
<dbReference type="Ensembl" id="ENST00000532620.6">
    <molecule id="Q3SY00-1"/>
    <property type="protein sequence ID" value="ENSP00000484252.1"/>
    <property type="gene ID" value="ENSG00000175513.10"/>
</dbReference>
<dbReference type="Ensembl" id="ENST00000608857.2">
    <molecule id="Q3SY00-2"/>
    <property type="protein sequence ID" value="ENSP00000477317.2"/>
    <property type="gene ID" value="ENSG00000175513.10"/>
</dbReference>
<dbReference type="GeneID" id="254187"/>
<dbReference type="KEGG" id="hsa:254187"/>
<dbReference type="MANE-Select" id="ENST00000532620.6">
    <property type="protein sequence ID" value="ENSP00000484252.1"/>
    <property type="RefSeq nucleotide sequence ID" value="NM_152762.3"/>
    <property type="RefSeq protein sequence ID" value="NP_689975.2"/>
</dbReference>
<dbReference type="UCSC" id="uc009yqw.2">
    <molecule id="Q3SY00-1"/>
    <property type="organism name" value="human"/>
</dbReference>
<dbReference type="AGR" id="HGNC:26555"/>
<dbReference type="CTD" id="254187"/>
<dbReference type="DisGeNET" id="254187"/>
<dbReference type="GeneCards" id="TSGA10IP"/>
<dbReference type="HGNC" id="HGNC:26555">
    <property type="gene designation" value="TSGA10IP"/>
</dbReference>
<dbReference type="HPA" id="ENSG00000175513">
    <property type="expression patterns" value="Tissue enriched (testis)"/>
</dbReference>
<dbReference type="neXtProt" id="NX_Q3SY00"/>
<dbReference type="OpenTargets" id="ENSG00000175513"/>
<dbReference type="PharmGKB" id="PA134983361"/>
<dbReference type="VEuPathDB" id="HostDB:ENSG00000175513"/>
<dbReference type="eggNOG" id="ENOG502S4NS">
    <property type="taxonomic scope" value="Eukaryota"/>
</dbReference>
<dbReference type="GeneTree" id="ENSGT00390000008351"/>
<dbReference type="HOGENOM" id="CLU_037959_0_0_1"/>
<dbReference type="InParanoid" id="Q3SY00"/>
<dbReference type="OMA" id="DCGPQKQ"/>
<dbReference type="OrthoDB" id="9897099at2759"/>
<dbReference type="PAN-GO" id="Q3SY00">
    <property type="GO annotations" value="4 GO annotations based on evolutionary models"/>
</dbReference>
<dbReference type="PathwayCommons" id="Q3SY00"/>
<dbReference type="SignaLink" id="Q3SY00"/>
<dbReference type="BioGRID-ORCS" id="254187">
    <property type="hits" value="10 hits in 685 CRISPR screens"/>
</dbReference>
<dbReference type="ChiTaRS" id="TSGA10IP">
    <property type="organism name" value="human"/>
</dbReference>
<dbReference type="GenomeRNAi" id="254187"/>
<dbReference type="Pharos" id="Q3SY00">
    <property type="development level" value="Tdark"/>
</dbReference>
<dbReference type="PRO" id="PR:Q3SY00"/>
<dbReference type="Proteomes" id="UP000005640">
    <property type="component" value="Chromosome 11"/>
</dbReference>
<dbReference type="RNAct" id="Q3SY00">
    <property type="molecule type" value="protein"/>
</dbReference>
<dbReference type="Bgee" id="ENSG00000175513">
    <property type="expression patterns" value="Expressed in male germ line stem cell (sensu Vertebrata) in testis and 55 other cell types or tissues"/>
</dbReference>
<dbReference type="ExpressionAtlas" id="Q3SY00">
    <property type="expression patterns" value="baseline and differential"/>
</dbReference>
<dbReference type="GO" id="GO:0005856">
    <property type="term" value="C:cytoskeleton"/>
    <property type="evidence" value="ECO:0007669"/>
    <property type="project" value="UniProtKB-ARBA"/>
</dbReference>
<dbReference type="GO" id="GO:0032391">
    <property type="term" value="C:photoreceptor connecting cilium"/>
    <property type="evidence" value="ECO:0000318"/>
    <property type="project" value="GO_Central"/>
</dbReference>
<dbReference type="GO" id="GO:0044782">
    <property type="term" value="P:cilium organization"/>
    <property type="evidence" value="ECO:0000318"/>
    <property type="project" value="GO_Central"/>
</dbReference>
<dbReference type="InterPro" id="IPR051655">
    <property type="entry name" value="FAM161"/>
</dbReference>
<dbReference type="PANTHER" id="PTHR21501">
    <property type="entry name" value="PROTEIN FAM-161"/>
    <property type="match status" value="1"/>
</dbReference>
<dbReference type="PANTHER" id="PTHR21501:SF5">
    <property type="entry name" value="TESTIS-SPECIFIC PROTEIN 10-INTERACTING PROTEIN"/>
    <property type="match status" value="1"/>
</dbReference>
<comment type="interaction">
    <interactant intactId="EBI-10241197">
        <id>Q3SY00</id>
    </interactant>
    <interactant intactId="EBI-8643161">
        <id>Q9NX04</id>
        <label>AIRIM</label>
    </interactant>
    <organismsDiffer>false</organismsDiffer>
    <experiments>3</experiments>
</comment>
<comment type="interaction">
    <interactant intactId="EBI-10241197">
        <id>Q3SY00</id>
    </interactant>
    <interactant intactId="EBI-357530">
        <id>Q9ULX6</id>
        <label>AKAP8L</label>
    </interactant>
    <organismsDiffer>false</organismsDiffer>
    <experiments>3</experiments>
</comment>
<comment type="interaction">
    <interactant intactId="EBI-10241197">
        <id>Q3SY00</id>
    </interactant>
    <interactant intactId="EBI-746752">
        <id>Q9Y2J4</id>
        <label>AMOTL2</label>
    </interactant>
    <organismsDiffer>false</organismsDiffer>
    <experiments>3</experiments>
</comment>
<comment type="interaction">
    <interactant intactId="EBI-10241197">
        <id>Q3SY00</id>
    </interactant>
    <interactant intactId="EBI-11978055">
        <id>Q10567-3</id>
        <label>AP1B1</label>
    </interactant>
    <organismsDiffer>false</organismsDiffer>
    <experiments>3</experiments>
</comment>
<comment type="interaction">
    <interactant intactId="EBI-10241197">
        <id>Q3SY00</id>
    </interactant>
    <interactant intactId="EBI-3447299">
        <id>O43307</id>
        <label>ARHGEF9</label>
    </interactant>
    <organismsDiffer>false</organismsDiffer>
    <experiments>3</experiments>
</comment>
<comment type="interaction">
    <interactant intactId="EBI-10241197">
        <id>Q3SY00</id>
    </interactant>
    <interactant intactId="EBI-11975051">
        <id>Q8TD16-2</id>
        <label>BICD2</label>
    </interactant>
    <organismsDiffer>false</organismsDiffer>
    <experiments>3</experiments>
</comment>
<comment type="interaction">
    <interactant intactId="EBI-10241197">
        <id>Q3SY00</id>
    </interactant>
    <interactant intactId="EBI-10171799">
        <id>A1A5D9</id>
        <label>BICDL2</label>
    </interactant>
    <organismsDiffer>false</organismsDiffer>
    <experiments>3</experiments>
</comment>
<comment type="interaction">
    <interactant intactId="EBI-10241197">
        <id>Q3SY00</id>
    </interactant>
    <interactant intactId="EBI-517623">
        <id>Q96CA5</id>
        <label>BIRC7</label>
    </interactant>
    <organismsDiffer>false</organismsDiffer>
    <experiments>3</experiments>
</comment>
<comment type="interaction">
    <interactant intactId="EBI-10241197">
        <id>Q3SY00</id>
    </interactant>
    <interactant intactId="EBI-739580">
        <id>Q13137</id>
        <label>CALCOCO2</label>
    </interactant>
    <organismsDiffer>false</organismsDiffer>
    <experiments>3</experiments>
</comment>
<comment type="interaction">
    <interactant intactId="EBI-10241197">
        <id>Q3SY00</id>
    </interactant>
    <interactant intactId="EBI-11530605">
        <id>Q9H257-2</id>
        <label>CARD9</label>
    </interactant>
    <organismsDiffer>false</organismsDiffer>
    <experiments>6</experiments>
</comment>
<comment type="interaction">
    <interactant intactId="EBI-10241197">
        <id>Q3SY00</id>
    </interactant>
    <interactant intactId="EBI-2559016">
        <id>Q6NZI2</id>
        <label>CAVIN1</label>
    </interactant>
    <organismsDiffer>false</organismsDiffer>
    <experiments>3</experiments>
</comment>
<comment type="interaction">
    <interactant intactId="EBI-10241197">
        <id>Q3SY00</id>
    </interactant>
    <interactant intactId="EBI-11524851">
        <id>Q8NA61-2</id>
        <label>CBY2</label>
    </interactant>
    <organismsDiffer>false</organismsDiffer>
    <experiments>3</experiments>
</comment>
<comment type="interaction">
    <interactant intactId="EBI-10241197">
        <id>Q3SY00</id>
    </interactant>
    <interactant intactId="EBI-10171570">
        <id>Q68D86</id>
        <label>CCDC102B</label>
    </interactant>
    <organismsDiffer>false</organismsDiffer>
    <experiments>3</experiments>
</comment>
<comment type="interaction">
    <interactant intactId="EBI-10241197">
        <id>Q3SY00</id>
    </interactant>
    <interactant intactId="EBI-744556">
        <id>Q96HB5</id>
        <label>CCDC120</label>
    </interactant>
    <organismsDiffer>false</organismsDiffer>
    <experiments>3</experiments>
</comment>
<comment type="interaction">
    <interactant intactId="EBI-10241197">
        <id>Q3SY00</id>
    </interactant>
    <interactant intactId="EBI-11977221">
        <id>Q86Z20</id>
        <label>CCDC125</label>
    </interactant>
    <organismsDiffer>false</organismsDiffer>
    <experiments>3</experiments>
</comment>
<comment type="interaction">
    <interactant intactId="EBI-10241197">
        <id>Q3SY00</id>
    </interactant>
    <interactant intactId="EBI-10961312">
        <id>Q8IYE1</id>
        <label>CCDC13</label>
    </interactant>
    <organismsDiffer>false</organismsDiffer>
    <experiments>3</experiments>
</comment>
<comment type="interaction">
    <interactant intactId="EBI-10241197">
        <id>Q3SY00</id>
    </interactant>
    <interactant intactId="EBI-2808286">
        <id>Q2TAC2</id>
        <label>CCDC57</label>
    </interactant>
    <organismsDiffer>false</organismsDiffer>
    <experiments>3</experiments>
</comment>
<comment type="interaction">
    <interactant intactId="EBI-10241197">
        <id>Q3SY00</id>
    </interactant>
    <interactant intactId="EBI-10961624">
        <id>Q2TAC2-2</id>
        <label>CCDC57</label>
    </interactant>
    <organismsDiffer>false</organismsDiffer>
    <experiments>3</experiments>
</comment>
<comment type="interaction">
    <interactant intactId="EBI-10241197">
        <id>Q3SY00</id>
    </interactant>
    <interactant intactId="EBI-347573">
        <id>A6NC98</id>
        <label>CCDC88B</label>
    </interactant>
    <organismsDiffer>false</organismsDiffer>
    <experiments>3</experiments>
</comment>
<comment type="interaction">
    <interactant intactId="EBI-10241197">
        <id>Q3SY00</id>
    </interactant>
    <interactant intactId="EBI-745859">
        <id>P55273</id>
        <label>CDKN2D</label>
    </interactant>
    <organismsDiffer>false</organismsDiffer>
    <experiments>3</experiments>
</comment>
<comment type="interaction">
    <interactant intactId="EBI-10241197">
        <id>Q3SY00</id>
    </interactant>
    <interactant intactId="EBI-1181367">
        <id>Q01850</id>
        <label>CDR2</label>
    </interactant>
    <organismsDiffer>false</organismsDiffer>
    <experiments>3</experiments>
</comment>
<comment type="interaction">
    <interactant intactId="EBI-10241197">
        <id>Q3SY00</id>
    </interactant>
    <interactant intactId="EBI-11063830">
        <id>Q86X02</id>
        <label>CDR2L</label>
    </interactant>
    <organismsDiffer>false</organismsDiffer>
    <experiments>6</experiments>
</comment>
<comment type="interaction">
    <interactant intactId="EBI-10241197">
        <id>Q3SY00</id>
    </interactant>
    <interactant intactId="EBI-11522539">
        <id>Q96MT8-3</id>
        <label>CEP63</label>
    </interactant>
    <organismsDiffer>false</organismsDiffer>
    <experiments>3</experiments>
</comment>
<comment type="interaction">
    <interactant intactId="EBI-10241197">
        <id>Q3SY00</id>
    </interactant>
    <interactant intactId="EBI-739624">
        <id>Q8NHQ1</id>
        <label>CEP70</label>
    </interactant>
    <organismsDiffer>false</organismsDiffer>
    <experiments>7</experiments>
</comment>
<comment type="interaction">
    <interactant intactId="EBI-10241197">
        <id>Q3SY00</id>
    </interactant>
    <interactant intactId="EBI-372594">
        <id>Q99828</id>
        <label>CIB1</label>
    </interactant>
    <organismsDiffer>false</organismsDiffer>
    <experiments>3</experiments>
</comment>
<comment type="interaction">
    <interactant intactId="EBI-10241197">
        <id>Q3SY00</id>
    </interactant>
    <interactant intactId="EBI-11982645">
        <id>Q8N4Y2-3</id>
        <label>CRACR2B</label>
    </interactant>
    <organismsDiffer>false</organismsDiffer>
    <experiments>3</experiments>
</comment>
<comment type="interaction">
    <interactant intactId="EBI-10241197">
        <id>Q3SY00</id>
    </interactant>
    <interactant intactId="EBI-1188472">
        <id>P78358</id>
        <label>CTAG1B</label>
    </interactant>
    <organismsDiffer>false</organismsDiffer>
    <experiments>3</experiments>
</comment>
<comment type="interaction">
    <interactant intactId="EBI-10241197">
        <id>Q3SY00</id>
    </interactant>
    <interactant intactId="EBI-3867333">
        <id>A8MQ03</id>
        <label>CYSRT1</label>
    </interactant>
    <organismsDiffer>false</organismsDiffer>
    <experiments>3</experiments>
</comment>
<comment type="interaction">
    <interactant intactId="EBI-10241197">
        <id>Q3SY00</id>
    </interactant>
    <interactant intactId="EBI-399105">
        <id>Q9NPF5</id>
        <label>DMAP1</label>
    </interactant>
    <organismsDiffer>false</organismsDiffer>
    <experiments>3</experiments>
</comment>
<comment type="interaction">
    <interactant intactId="EBI-10241197">
        <id>Q3SY00</id>
    </interactant>
    <interactant intactId="EBI-740680">
        <id>Q8WWB3</id>
        <label>DYDC1</label>
    </interactant>
    <organismsDiffer>false</organismsDiffer>
    <experiments>3</experiments>
</comment>
<comment type="interaction">
    <interactant intactId="EBI-10241197">
        <id>Q3SY00</id>
    </interactant>
    <interactant intactId="EBI-743105">
        <id>Q5JVL4</id>
        <label>EFHC1</label>
    </interactant>
    <organismsDiffer>false</organismsDiffer>
    <experiments>3</experiments>
</comment>
<comment type="interaction">
    <interactant intactId="EBI-10241197">
        <id>Q3SY00</id>
    </interactant>
    <interactant intactId="EBI-11958845">
        <id>O94868-3</id>
        <label>FCHSD2</label>
    </interactant>
    <organismsDiffer>false</organismsDiffer>
    <experiments>3</experiments>
</comment>
<comment type="interaction">
    <interactant intactId="EBI-10241197">
        <id>Q3SY00</id>
    </interactant>
    <interactant intactId="EBI-741101">
        <id>Q13643</id>
        <label>FHL3</label>
    </interactant>
    <organismsDiffer>false</organismsDiffer>
    <experiments>5</experiments>
</comment>
<comment type="interaction">
    <interactant intactId="EBI-10241197">
        <id>Q3SY00</id>
    </interactant>
    <interactant intactId="EBI-725515">
        <id>O43559</id>
        <label>FRS3</label>
    </interactant>
    <organismsDiffer>false</organismsDiffer>
    <experiments>3</experiments>
</comment>
<comment type="interaction">
    <interactant intactId="EBI-10241197">
        <id>Q3SY00</id>
    </interactant>
    <interactant intactId="EBI-5661036">
        <id>A1L4K1</id>
        <label>FSD2</label>
    </interactant>
    <organismsDiffer>false</organismsDiffer>
    <experiments>3</experiments>
</comment>
<comment type="interaction">
    <interactant intactId="EBI-10241197">
        <id>Q3SY00</id>
    </interactant>
    <interactant intactId="EBI-1052570">
        <id>O95995</id>
        <label>GAS8</label>
    </interactant>
    <organismsDiffer>false</organismsDiffer>
    <experiments>3</experiments>
</comment>
<comment type="interaction">
    <interactant intactId="EBI-10241197">
        <id>Q3SY00</id>
    </interactant>
    <interactant intactId="EBI-618309">
        <id>Q08379</id>
        <label>GOLGA2</label>
    </interactant>
    <organismsDiffer>false</organismsDiffer>
    <experiments>3</experiments>
</comment>
<comment type="interaction">
    <interactant intactId="EBI-10241197">
        <id>Q3SY00</id>
    </interactant>
    <interactant intactId="EBI-11163335">
        <id>Q9NYA3</id>
        <label>GOLGA6A</label>
    </interactant>
    <organismsDiffer>false</organismsDiffer>
    <experiments>3</experiments>
</comment>
<comment type="interaction">
    <interactant intactId="EBI-10241197">
        <id>Q3SY00</id>
    </interactant>
    <interactant intactId="EBI-5916454">
        <id>A6NEM1</id>
        <label>GOLGA6L9</label>
    </interactant>
    <organismsDiffer>false</organismsDiffer>
    <experiments>3</experiments>
</comment>
<comment type="interaction">
    <interactant intactId="EBI-10241197">
        <id>Q3SY00</id>
    </interactant>
    <interactant intactId="EBI-11519926">
        <id>Q6PI77</id>
        <label>GPRASP3</label>
    </interactant>
    <organismsDiffer>false</organismsDiffer>
    <experiments>3</experiments>
</comment>
<comment type="interaction">
    <interactant intactId="EBI-10241197">
        <id>Q3SY00</id>
    </interactant>
    <interactant intactId="EBI-717919">
        <id>Q4V328</id>
        <label>GRIPAP1</label>
    </interactant>
    <organismsDiffer>false</organismsDiffer>
    <experiments>3</experiments>
</comment>
<comment type="interaction">
    <interactant intactId="EBI-10241197">
        <id>Q3SY00</id>
    </interactant>
    <interactant intactId="EBI-2549423">
        <id>Q6NT76</id>
        <label>HMBOX1</label>
    </interactant>
    <organismsDiffer>false</organismsDiffer>
    <experiments>3</experiments>
</comment>
<comment type="interaction">
    <interactant intactId="EBI-10241197">
        <id>Q3SY00</id>
    </interactant>
    <interactant intactId="EBI-10961706">
        <id>Q96ED9-2</id>
        <label>HOOK2</label>
    </interactant>
    <organismsDiffer>false</organismsDiffer>
    <experiments>3</experiments>
</comment>
<comment type="interaction">
    <interactant intactId="EBI-10241197">
        <id>Q3SY00</id>
    </interactant>
    <interactant intactId="EBI-7116203">
        <id>O75031</id>
        <label>HSF2BP</label>
    </interactant>
    <organismsDiffer>false</organismsDiffer>
    <experiments>3</experiments>
</comment>
<comment type="interaction">
    <interactant intactId="EBI-10241197">
        <id>Q3SY00</id>
    </interactant>
    <interactant intactId="EBI-747204">
        <id>Q9UKT9</id>
        <label>IKZF3</label>
    </interactant>
    <organismsDiffer>false</organismsDiffer>
    <experiments>3</experiments>
</comment>
<comment type="interaction">
    <interactant intactId="EBI-10241197">
        <id>Q3SY00</id>
    </interactant>
    <interactant intactId="EBI-2680803">
        <id>Q96N16</id>
        <label>JAKMIP1</label>
    </interactant>
    <organismsDiffer>false</organismsDiffer>
    <experiments>3</experiments>
</comment>
<comment type="interaction">
    <interactant intactId="EBI-10241197">
        <id>Q3SY00</id>
    </interactant>
    <interactant intactId="EBI-2556193">
        <id>Q63ZY3</id>
        <label>KANK2</label>
    </interactant>
    <organismsDiffer>false</organismsDiffer>
    <experiments>3</experiments>
</comment>
<comment type="interaction">
    <interactant intactId="EBI-10241197">
        <id>Q3SY00</id>
    </interactant>
    <interactant intactId="EBI-722504">
        <id>O75525</id>
        <label>KHDRBS3</label>
    </interactant>
    <organismsDiffer>false</organismsDiffer>
    <experiments>3</experiments>
</comment>
<comment type="interaction">
    <interactant intactId="EBI-10241197">
        <id>Q3SY00</id>
    </interactant>
    <interactant intactId="EBI-14069005">
        <id>Q9BVG8-5</id>
        <label>KIFC3</label>
    </interactant>
    <organismsDiffer>false</organismsDiffer>
    <experiments>3</experiments>
</comment>
<comment type="interaction">
    <interactant intactId="EBI-10241197">
        <id>Q3SY00</id>
    </interactant>
    <interactant intactId="EBI-2952736">
        <id>Q2M2I5</id>
        <label>KRT24</label>
    </interactant>
    <organismsDiffer>false</organismsDiffer>
    <experiments>3</experiments>
</comment>
<comment type="interaction">
    <interactant intactId="EBI-10241197">
        <id>Q3SY00</id>
    </interactant>
    <interactant intactId="EBI-11958506">
        <id>O76013-2</id>
        <label>KRT36</label>
    </interactant>
    <organismsDiffer>false</organismsDiffer>
    <experiments>3</experiments>
</comment>
<comment type="interaction">
    <interactant intactId="EBI-10241197">
        <id>Q3SY00</id>
    </interactant>
    <interactant intactId="EBI-10171697">
        <id>Q6A162</id>
        <label>KRT40</label>
    </interactant>
    <organismsDiffer>false</organismsDiffer>
    <experiments>3</experiments>
</comment>
<comment type="interaction">
    <interactant intactId="EBI-10241197">
        <id>Q3SY00</id>
    </interactant>
    <interactant intactId="EBI-9996498">
        <id>O43790</id>
        <label>KRT86</label>
    </interactant>
    <organismsDiffer>false</organismsDiffer>
    <experiments>3</experiments>
</comment>
<comment type="interaction">
    <interactant intactId="EBI-10241197">
        <id>Q3SY00</id>
    </interactant>
    <interactant intactId="EBI-10176379">
        <id>P59991</id>
        <label>KRTAP12-2</label>
    </interactant>
    <organismsDiffer>false</organismsDiffer>
    <experiments>3</experiments>
</comment>
<comment type="interaction">
    <interactant intactId="EBI-10241197">
        <id>Q3SY00</id>
    </interactant>
    <interactant intactId="EBI-11962084">
        <id>Q3LI66</id>
        <label>KRTAP6-2</label>
    </interactant>
    <organismsDiffer>false</organismsDiffer>
    <experiments>3</experiments>
</comment>
<comment type="interaction">
    <interactant intactId="EBI-10241197">
        <id>Q3SY00</id>
    </interactant>
    <interactant intactId="EBI-8473670">
        <id>O95447</id>
        <label>LCA5L</label>
    </interactant>
    <organismsDiffer>false</organismsDiffer>
    <experiments>3</experiments>
</comment>
<comment type="interaction">
    <interactant intactId="EBI-10241197">
        <id>Q3SY00</id>
    </interactant>
    <interactant intactId="EBI-740738">
        <id>O95751</id>
        <label>LDOC1</label>
    </interactant>
    <organismsDiffer>false</organismsDiffer>
    <experiments>3</experiments>
</comment>
<comment type="interaction">
    <interactant intactId="EBI-10241197">
        <id>Q3SY00</id>
    </interactant>
    <interactant intactId="EBI-721601">
        <id>Q05469</id>
        <label>LIPE</label>
    </interactant>
    <organismsDiffer>false</organismsDiffer>
    <experiments>3</experiments>
</comment>
<comment type="interaction">
    <interactant intactId="EBI-10241197">
        <id>Q3SY00</id>
    </interactant>
    <interactant intactId="EBI-2830427">
        <id>Q03252</id>
        <label>LMNB2</label>
    </interactant>
    <organismsDiffer>false</organismsDiffer>
    <experiments>3</experiments>
</comment>
<comment type="interaction">
    <interactant intactId="EBI-10241197">
        <id>Q3SY00</id>
    </interactant>
    <interactant intactId="EBI-11959475">
        <id>P25791-3</id>
        <label>LMO2</label>
    </interactant>
    <organismsDiffer>false</organismsDiffer>
    <experiments>3</experiments>
</comment>
<comment type="interaction">
    <interactant intactId="EBI-10241197">
        <id>Q3SY00</id>
    </interactant>
    <interactant intactId="EBI-1216080">
        <id>Q9Y250</id>
        <label>LZTS1</label>
    </interactant>
    <organismsDiffer>false</organismsDiffer>
    <experiments>3</experiments>
</comment>
<comment type="interaction">
    <interactant intactId="EBI-10241197">
        <id>Q3SY00</id>
    </interactant>
    <interactant intactId="EBI-716006">
        <id>Q9Y5V3</id>
        <label>MAGED1</label>
    </interactant>
    <organismsDiffer>false</organismsDiffer>
    <experiments>3</experiments>
</comment>
<comment type="interaction">
    <interactant intactId="EBI-10241197">
        <id>Q3SY00</id>
    </interactant>
    <interactant intactId="EBI-12516603">
        <id>Q8WWY6</id>
        <label>MBD3L1</label>
    </interactant>
    <organismsDiffer>false</organismsDiffer>
    <experiments>3</experiments>
</comment>
<comment type="interaction">
    <interactant intactId="EBI-10241197">
        <id>Q3SY00</id>
    </interactant>
    <interactant intactId="EBI-724076">
        <id>Q99750</id>
        <label>MDFI</label>
    </interactant>
    <organismsDiffer>false</organismsDiffer>
    <experiments>3</experiments>
</comment>
<comment type="interaction">
    <interactant intactId="EBI-10241197">
        <id>Q3SY00</id>
    </interactant>
    <interactant intactId="EBI-18582591">
        <id>Q99687-3</id>
        <label>MEIS3</label>
    </interactant>
    <organismsDiffer>false</organismsDiffer>
    <experiments>3</experiments>
</comment>
<comment type="interaction">
    <interactant intactId="EBI-10241197">
        <id>Q3SY00</id>
    </interactant>
    <interactant intactId="EBI-16439278">
        <id>Q6FHY5</id>
        <label>MEOX2</label>
    </interactant>
    <organismsDiffer>false</organismsDiffer>
    <experiments>3</experiments>
</comment>
<comment type="interaction">
    <interactant intactId="EBI-10241197">
        <id>Q3SY00</id>
    </interactant>
    <interactant intactId="EBI-2548751">
        <id>Q8TD10</id>
        <label>MIPOL1</label>
    </interactant>
    <organismsDiffer>false</organismsDiffer>
    <experiments>3</experiments>
</comment>
<comment type="interaction">
    <interactant intactId="EBI-10241197">
        <id>Q3SY00</id>
    </interactant>
    <interactant intactId="EBI-1104552">
        <id>Q9NYP9</id>
        <label>MIS18A</label>
    </interactant>
    <organismsDiffer>false</organismsDiffer>
    <experiments>3</experiments>
</comment>
<comment type="interaction">
    <interactant intactId="EBI-10241197">
        <id>Q3SY00</id>
    </interactant>
    <interactant intactId="EBI-2340269">
        <id>Q13064</id>
        <label>MKRN3</label>
    </interactant>
    <organismsDiffer>false</organismsDiffer>
    <experiments>3</experiments>
</comment>
<comment type="interaction">
    <interactant intactId="EBI-10241197">
        <id>Q3SY00</id>
    </interactant>
    <interactant intactId="EBI-11599933">
        <id>Q4VC12</id>
        <label>MSS51</label>
    </interactant>
    <organismsDiffer>false</organismsDiffer>
    <experiments>3</experiments>
</comment>
<comment type="interaction">
    <interactant intactId="EBI-10241197">
        <id>Q3SY00</id>
    </interactant>
    <interactant intactId="EBI-742948">
        <id>Q5JR59</id>
        <label>MTUS2</label>
    </interactant>
    <organismsDiffer>false</organismsDiffer>
    <experiments>4</experiments>
</comment>
<comment type="interaction">
    <interactant intactId="EBI-10241197">
        <id>Q3SY00</id>
    </interactant>
    <interactant intactId="EBI-11522433">
        <id>Q5JR59-3</id>
        <label>MTUS2</label>
    </interactant>
    <organismsDiffer>false</organismsDiffer>
    <experiments>4</experiments>
</comment>
<comment type="interaction">
    <interactant intactId="EBI-10241197">
        <id>Q3SY00</id>
    </interactant>
    <interactant intactId="EBI-8641936">
        <id>Q15742</id>
        <label>NAB2</label>
    </interactant>
    <organismsDiffer>false</organismsDiffer>
    <experiments>3</experiments>
</comment>
<comment type="interaction">
    <interactant intactId="EBI-10241197">
        <id>Q3SY00</id>
    </interactant>
    <interactant intactId="EBI-3921217">
        <id>Q9HBI0</id>
        <label>PARVG</label>
    </interactant>
    <organismsDiffer>false</organismsDiffer>
    <experiments>3</experiments>
</comment>
<comment type="interaction">
    <interactant intactId="EBI-10241197">
        <id>Q3SY00</id>
    </interactant>
    <interactant intactId="EBI-350517">
        <id>Q9NR12</id>
        <label>PDLIM7</label>
    </interactant>
    <organismsDiffer>false</organismsDiffer>
    <experiments>3</experiments>
</comment>
<comment type="interaction">
    <interactant intactId="EBI-10241197">
        <id>Q3SY00</id>
    </interactant>
    <interactant intactId="EBI-79165">
        <id>Q9NRD5</id>
        <label>PICK1</label>
    </interactant>
    <organismsDiffer>false</organismsDiffer>
    <experiments>3</experiments>
</comment>
<comment type="interaction">
    <interactant intactId="EBI-10241197">
        <id>Q3SY00</id>
    </interactant>
    <interactant intactId="EBI-11320284">
        <id>Q9NQX0</id>
        <label>PRDM6</label>
    </interactant>
    <organismsDiffer>false</organismsDiffer>
    <experiments>3</experiments>
</comment>
<comment type="interaction">
    <interactant intactId="EBI-10241197">
        <id>Q3SY00</id>
    </interactant>
    <interactant intactId="EBI-2805516">
        <id>P31321</id>
        <label>PRKAR1B</label>
    </interactant>
    <organismsDiffer>false</organismsDiffer>
    <experiments>3</experiments>
</comment>
<comment type="interaction">
    <interactant intactId="EBI-10241197">
        <id>Q3SY00</id>
    </interactant>
    <interactant intactId="EBI-1050964">
        <id>O43586</id>
        <label>PSTPIP1</label>
    </interactant>
    <organismsDiffer>false</organismsDiffer>
    <experiments>3</experiments>
</comment>
<comment type="interaction">
    <interactant intactId="EBI-10241197">
        <id>Q3SY00</id>
    </interactant>
    <interactant intactId="EBI-12013954">
        <id>Q0VAM2-3</id>
        <label>RASGEF1B</label>
    </interactant>
    <organismsDiffer>false</organismsDiffer>
    <experiments>3</experiments>
</comment>
<comment type="interaction">
    <interactant intactId="EBI-10241197">
        <id>Q3SY00</id>
    </interactant>
    <interactant intactId="EBI-715531">
        <id>Q9BQ04</id>
        <label>RBM4B</label>
    </interactant>
    <organismsDiffer>false</organismsDiffer>
    <experiments>3</experiments>
</comment>
<comment type="interaction">
    <interactant intactId="EBI-10241197">
        <id>Q3SY00</id>
    </interactant>
    <interactant intactId="EBI-740343">
        <id>Q93062-3</id>
        <label>RBPMS</label>
    </interactant>
    <organismsDiffer>false</organismsDiffer>
    <experiments>3</experiments>
</comment>
<comment type="interaction">
    <interactant intactId="EBI-10241197">
        <id>Q3SY00</id>
    </interactant>
    <interactant intactId="EBI-1378139">
        <id>Q9HAT0</id>
        <label>ROPN1</label>
    </interactant>
    <organismsDiffer>false</organismsDiffer>
    <experiments>3</experiments>
</comment>
<comment type="interaction">
    <interactant intactId="EBI-10241197">
        <id>Q3SY00</id>
    </interactant>
    <interactant intactId="EBI-18560266">
        <id>Q92753-1</id>
        <label>RORB</label>
    </interactant>
    <organismsDiffer>false</organismsDiffer>
    <experiments>3</experiments>
</comment>
<comment type="interaction">
    <interactant intactId="EBI-10241197">
        <id>Q3SY00</id>
    </interactant>
    <interactant intactId="EBI-11957366">
        <id>Q59EK9-3</id>
        <label>RUNDC3A</label>
    </interactant>
    <organismsDiffer>false</organismsDiffer>
    <experiments>3</experiments>
</comment>
<comment type="interaction">
    <interactant intactId="EBI-10241197">
        <id>Q3SY00</id>
    </interactant>
    <interactant intactId="EBI-741237">
        <id>O60504</id>
        <label>SORBS3</label>
    </interactant>
    <organismsDiffer>false</organismsDiffer>
    <experiments>3</experiments>
</comment>
<comment type="interaction">
    <interactant intactId="EBI-10241197">
        <id>Q3SY00</id>
    </interactant>
    <interactant intactId="EBI-742688">
        <id>Q9NZD8</id>
        <label>SPG21</label>
    </interactant>
    <organismsDiffer>false</organismsDiffer>
    <experiments>3</experiments>
</comment>
<comment type="interaction">
    <interactant intactId="EBI-10241197">
        <id>Q3SY00</id>
    </interactant>
    <interactant intactId="EBI-2212028">
        <id>Q9Y2D8</id>
        <label>SSX2IP</label>
    </interactant>
    <organismsDiffer>false</organismsDiffer>
    <experiments>3</experiments>
</comment>
<comment type="interaction">
    <interactant intactId="EBI-10241197">
        <id>Q3SY00</id>
    </interactant>
    <interactant intactId="EBI-714135">
        <id>O75558</id>
        <label>STX11</label>
    </interactant>
    <organismsDiffer>false</organismsDiffer>
    <experiments>3</experiments>
</comment>
<comment type="interaction">
    <interactant intactId="EBI-10241197">
        <id>Q3SY00</id>
    </interactant>
    <interactant intactId="EBI-712466">
        <id>Q16623</id>
        <label>STX1A</label>
    </interactant>
    <organismsDiffer>false</organismsDiffer>
    <experiments>3</experiments>
</comment>
<comment type="interaction">
    <interactant intactId="EBI-10241197">
        <id>Q3SY00</id>
    </interactant>
    <interactant intactId="EBI-1644036">
        <id>Q86TI0</id>
        <label>TBC1D1</label>
    </interactant>
    <organismsDiffer>false</organismsDiffer>
    <experiments>3</experiments>
</comment>
<comment type="interaction">
    <interactant intactId="EBI-10241197">
        <id>Q3SY00</id>
    </interactant>
    <interactant intactId="EBI-10180409">
        <id>Q969V4</id>
        <label>TEKT1</label>
    </interactant>
    <organismsDiffer>false</organismsDiffer>
    <experiments>3</experiments>
</comment>
<comment type="interaction">
    <interactant intactId="EBI-10241197">
        <id>Q3SY00</id>
    </interactant>
    <interactant intactId="EBI-1105213">
        <id>Q9UBB9</id>
        <label>TFIP11</label>
    </interactant>
    <organismsDiffer>false</organismsDiffer>
    <experiments>3</experiments>
</comment>
<comment type="interaction">
    <interactant intactId="EBI-10241197">
        <id>Q3SY00</id>
    </interactant>
    <interactant intactId="EBI-11741437">
        <id>Q08117-2</id>
        <label>TLE5</label>
    </interactant>
    <organismsDiffer>false</organismsDiffer>
    <experiments>3</experiments>
</comment>
<comment type="interaction">
    <interactant intactId="EBI-10241197">
        <id>Q3SY00</id>
    </interactant>
    <interactant intactId="EBI-355744">
        <id>Q12933</id>
        <label>TRAF2</label>
    </interactant>
    <organismsDiffer>false</organismsDiffer>
    <experiments>3</experiments>
</comment>
<comment type="interaction">
    <interactant intactId="EBI-10241197">
        <id>Q3SY00</id>
    </interactant>
    <interactant intactId="EBI-3650647">
        <id>Q9BUZ4</id>
        <label>TRAF4</label>
    </interactant>
    <organismsDiffer>false</organismsDiffer>
    <experiments>3</experiments>
</comment>
<comment type="interaction">
    <interactant intactId="EBI-10241197">
        <id>Q3SY00</id>
    </interactant>
    <interactant intactId="EBI-719493">
        <id>P14373</id>
        <label>TRIM27</label>
    </interactant>
    <organismsDiffer>false</organismsDiffer>
    <experiments>3</experiments>
</comment>
<comment type="interaction">
    <interactant intactId="EBI-10241197">
        <id>Q3SY00</id>
    </interactant>
    <interactant intactId="EBI-12840050">
        <id>Q9C035-3</id>
        <label>TRIM5</label>
    </interactant>
    <organismsDiffer>false</organismsDiffer>
    <experiments>3</experiments>
</comment>
<comment type="interaction">
    <interactant intactId="EBI-10241197">
        <id>Q3SY00</id>
    </interactant>
    <interactant intactId="EBI-9867283">
        <id>Q86XT4</id>
        <label>TRIM50</label>
    </interactant>
    <organismsDiffer>false</organismsDiffer>
    <experiments>3</experiments>
</comment>
<comment type="interaction">
    <interactant intactId="EBI-10241197">
        <id>Q3SY00</id>
    </interactant>
    <interactant intactId="EBI-742327">
        <id>Q15654</id>
        <label>TRIP6</label>
    </interactant>
    <organismsDiffer>false</organismsDiffer>
    <experiments>3</experiments>
</comment>
<comment type="interaction">
    <interactant intactId="EBI-10241197">
        <id>Q3SY00</id>
    </interactant>
    <interactant intactId="EBI-12806590">
        <id>Q86WV8</id>
        <label>TSC1</label>
    </interactant>
    <organismsDiffer>false</organismsDiffer>
    <experiments>3</experiments>
</comment>
<comment type="interaction">
    <interactant intactId="EBI-10241197">
        <id>Q3SY00</id>
    </interactant>
    <interactant intactId="EBI-9090990">
        <id>Q5W5X9-3</id>
        <label>TTC23</label>
    </interactant>
    <organismsDiffer>false</organismsDiffer>
    <experiments>3</experiments>
</comment>
<comment type="interaction">
    <interactant intactId="EBI-10241197">
        <id>Q3SY00</id>
    </interactant>
    <interactant intactId="EBI-8656864">
        <id>Q6PF05</id>
        <label>TTC23L</label>
    </interactant>
    <organismsDiffer>false</organismsDiffer>
    <experiments>3</experiments>
</comment>
<comment type="interaction">
    <interactant intactId="EBI-10241197">
        <id>Q3SY00</id>
    </interactant>
    <interactant intactId="EBI-12157345">
        <id>Q8TAS1-2</id>
        <label>UHMK1</label>
    </interactant>
    <organismsDiffer>false</organismsDiffer>
    <experiments>3</experiments>
</comment>
<comment type="interaction">
    <interactant intactId="EBI-10241197">
        <id>Q3SY00</id>
    </interactant>
    <interactant intactId="EBI-12040603">
        <id>Q9NZC7-5</id>
        <label>WWOX</label>
    </interactant>
    <organismsDiffer>false</organismsDiffer>
    <experiments>5</experiments>
</comment>
<comment type="interaction">
    <interactant intactId="EBI-10241197">
        <id>Q3SY00</id>
    </interactant>
    <interactant intactId="EBI-515331">
        <id>P07947</id>
        <label>YES1</label>
    </interactant>
    <organismsDiffer>false</organismsDiffer>
    <experiments>3</experiments>
</comment>
<comment type="interaction">
    <interactant intactId="EBI-10241197">
        <id>Q3SY00</id>
    </interactant>
    <interactant intactId="EBI-527853">
        <id>Q9UGI0</id>
        <label>ZRANB1</label>
    </interactant>
    <organismsDiffer>false</organismsDiffer>
    <experiments>3</experiments>
</comment>
<comment type="alternative products">
    <event type="alternative splicing"/>
    <isoform>
        <id>Q3SY00-1</id>
        <name>1</name>
        <sequence type="displayed"/>
    </isoform>
    <isoform>
        <id>Q3SY00-2</id>
        <name>2</name>
        <sequence type="described" ref="VSP_033196 VSP_033197"/>
    </isoform>
</comment>
<comment type="caution">
    <text evidence="5">It is uncertain whether Met-1 or Met-7 is the initiator.</text>
</comment>
<sequence>MGQDTDMLNTYQQLVRTPSVRPGQDVRLQAPGTRTGLLKLLSTVSQDKQGCLGSGDGVPNQDLQQRSQSSRQTAKKDRKPRGQSKKGQGSEESEDHFPLLPRKPSFPFQWAWESIATDVRAVLQPSSPTPGHQALPMPSSFSQRQSRRKSTANLPEAHGCCWKTEAQNLKARQQLGAWGGVSIPTGKGELGSEPPSGLQLPGRRPGSGSASDKQVQLQSLGAEEAERGLSSGVLPQRPRRGSISEEEQFSEATEEAEEGEHRTPCRRRAGCQRKGQISGEEASDEGEVQGQSQGSSPSFNNLRRRQWRKTRAKELQGPWDLEKLHRQLQRDLDCGPQKLPWKTLRAAFQASKRNGKAYASGYDETFVSANLPNRTFHKRQEATRSLLQAWERQRQEERQQAELRRARTQHVQRQVAHCLAAYAPRGSRGPGAAQRKLEELRRQERQRFAEYQAELQGIQHRVQARPFLFQQAMQANARLTVTRRFSQVLSALGLDEEQLLSEAGKVDREGTPRKPRSHRSMGVRMEHSPQRPPRTEPTGSQPDRHYNPSLDPECSP</sequence>